<protein>
    <recommendedName>
        <fullName evidence="1">Macrolide export ATP-binding/permease protein MacB</fullName>
        <ecNumber evidence="1">7.6.2.-</ecNumber>
    </recommendedName>
</protein>
<proteinExistence type="inferred from homology"/>
<keyword id="KW-0046">Antibiotic resistance</keyword>
<keyword id="KW-0067">ATP-binding</keyword>
<keyword id="KW-0997">Cell inner membrane</keyword>
<keyword id="KW-1003">Cell membrane</keyword>
<keyword id="KW-0472">Membrane</keyword>
<keyword id="KW-0547">Nucleotide-binding</keyword>
<keyword id="KW-1278">Translocase</keyword>
<keyword id="KW-0812">Transmembrane</keyword>
<keyword id="KW-1133">Transmembrane helix</keyword>
<keyword id="KW-0813">Transport</keyword>
<gene>
    <name evidence="1" type="primary">macB</name>
    <name type="ordered locus">Pcryo_0562</name>
</gene>
<evidence type="ECO:0000255" key="1">
    <source>
        <dbReference type="HAMAP-Rule" id="MF_01720"/>
    </source>
</evidence>
<dbReference type="EC" id="7.6.2.-" evidence="1"/>
<dbReference type="EMBL" id="CP000323">
    <property type="protein sequence ID" value="ABE74345.1"/>
    <property type="molecule type" value="Genomic_DNA"/>
</dbReference>
<dbReference type="RefSeq" id="WP_011512913.1">
    <property type="nucleotide sequence ID" value="NC_007969.1"/>
</dbReference>
<dbReference type="SMR" id="Q1QDA8"/>
<dbReference type="STRING" id="335284.Pcryo_0562"/>
<dbReference type="KEGG" id="pcr:Pcryo_0562"/>
<dbReference type="eggNOG" id="COG0577">
    <property type="taxonomic scope" value="Bacteria"/>
</dbReference>
<dbReference type="eggNOG" id="COG1136">
    <property type="taxonomic scope" value="Bacteria"/>
</dbReference>
<dbReference type="HOGENOM" id="CLU_000604_78_1_6"/>
<dbReference type="Proteomes" id="UP000002425">
    <property type="component" value="Chromosome"/>
</dbReference>
<dbReference type="GO" id="GO:0005886">
    <property type="term" value="C:plasma membrane"/>
    <property type="evidence" value="ECO:0007669"/>
    <property type="project" value="UniProtKB-SubCell"/>
</dbReference>
<dbReference type="GO" id="GO:0005524">
    <property type="term" value="F:ATP binding"/>
    <property type="evidence" value="ECO:0007669"/>
    <property type="project" value="UniProtKB-KW"/>
</dbReference>
<dbReference type="GO" id="GO:0016887">
    <property type="term" value="F:ATP hydrolysis activity"/>
    <property type="evidence" value="ECO:0007669"/>
    <property type="project" value="InterPro"/>
</dbReference>
<dbReference type="GO" id="GO:0022857">
    <property type="term" value="F:transmembrane transporter activity"/>
    <property type="evidence" value="ECO:0007669"/>
    <property type="project" value="TreeGrafter"/>
</dbReference>
<dbReference type="GO" id="GO:0046677">
    <property type="term" value="P:response to antibiotic"/>
    <property type="evidence" value="ECO:0007669"/>
    <property type="project" value="UniProtKB-KW"/>
</dbReference>
<dbReference type="CDD" id="cd03255">
    <property type="entry name" value="ABC_MJ0796_LolCDE_FtsE"/>
    <property type="match status" value="1"/>
</dbReference>
<dbReference type="FunFam" id="3.40.50.300:FF:000032">
    <property type="entry name" value="Export ABC transporter ATP-binding protein"/>
    <property type="match status" value="1"/>
</dbReference>
<dbReference type="Gene3D" id="3.40.50.300">
    <property type="entry name" value="P-loop containing nucleotide triphosphate hydrolases"/>
    <property type="match status" value="1"/>
</dbReference>
<dbReference type="InterPro" id="IPR003593">
    <property type="entry name" value="AAA+_ATPase"/>
</dbReference>
<dbReference type="InterPro" id="IPR003838">
    <property type="entry name" value="ABC3_permease_C"/>
</dbReference>
<dbReference type="InterPro" id="IPR003439">
    <property type="entry name" value="ABC_transporter-like_ATP-bd"/>
</dbReference>
<dbReference type="InterPro" id="IPR017871">
    <property type="entry name" value="ABC_transporter-like_CS"/>
</dbReference>
<dbReference type="InterPro" id="IPR017911">
    <property type="entry name" value="MacB-like_ATP-bd"/>
</dbReference>
<dbReference type="InterPro" id="IPR025857">
    <property type="entry name" value="MacB_PCD"/>
</dbReference>
<dbReference type="InterPro" id="IPR050250">
    <property type="entry name" value="Macrolide_Exporter_MacB"/>
</dbReference>
<dbReference type="InterPro" id="IPR027417">
    <property type="entry name" value="P-loop_NTPase"/>
</dbReference>
<dbReference type="PANTHER" id="PTHR30572:SF14">
    <property type="entry name" value="MACROLIDE EXPORT ATP-BINDING_PERMEASE PROTEIN MACB"/>
    <property type="match status" value="1"/>
</dbReference>
<dbReference type="PANTHER" id="PTHR30572">
    <property type="entry name" value="MEMBRANE COMPONENT OF TRANSPORTER-RELATED"/>
    <property type="match status" value="1"/>
</dbReference>
<dbReference type="Pfam" id="PF00005">
    <property type="entry name" value="ABC_tran"/>
    <property type="match status" value="1"/>
</dbReference>
<dbReference type="Pfam" id="PF02687">
    <property type="entry name" value="FtsX"/>
    <property type="match status" value="1"/>
</dbReference>
<dbReference type="Pfam" id="PF12704">
    <property type="entry name" value="MacB_PCD"/>
    <property type="match status" value="1"/>
</dbReference>
<dbReference type="SMART" id="SM00382">
    <property type="entry name" value="AAA"/>
    <property type="match status" value="1"/>
</dbReference>
<dbReference type="SUPFAM" id="SSF52540">
    <property type="entry name" value="P-loop containing nucleoside triphosphate hydrolases"/>
    <property type="match status" value="1"/>
</dbReference>
<dbReference type="PROSITE" id="PS00211">
    <property type="entry name" value="ABC_TRANSPORTER_1"/>
    <property type="match status" value="1"/>
</dbReference>
<dbReference type="PROSITE" id="PS50893">
    <property type="entry name" value="ABC_TRANSPORTER_2"/>
    <property type="match status" value="1"/>
</dbReference>
<dbReference type="PROSITE" id="PS51267">
    <property type="entry name" value="MACB"/>
    <property type="match status" value="1"/>
</dbReference>
<comment type="function">
    <text evidence="1">Part of the tripartite efflux system MacAB-TolC. MacB is a non-canonical ABC transporter that contains transmembrane domains (TMD), which form a pore in the inner membrane, and an ATP-binding domain (NBD), which is responsible for energy generation. Confers resistance against macrolides.</text>
</comment>
<comment type="subunit">
    <text evidence="1">Homodimer. Part of the tripartite efflux system MacAB-TolC, which is composed of an inner membrane transporter, MacB, a periplasmic membrane fusion protein, MacA, and an outer membrane component, TolC. The complex forms a large protein conduit and can translocate molecules across both the inner and outer membranes. Interacts with MacA.</text>
</comment>
<comment type="subcellular location">
    <subcellularLocation>
        <location evidence="1">Cell inner membrane</location>
        <topology evidence="1">Multi-pass membrane protein</topology>
    </subcellularLocation>
</comment>
<comment type="similarity">
    <text evidence="1">Belongs to the ABC transporter superfamily. Macrolide exporter (TC 3.A.1.122) family.</text>
</comment>
<reference key="1">
    <citation type="submission" date="2006-03" db="EMBL/GenBank/DDBJ databases">
        <title>Complete sequence of chromosome of Psychrobacter cryohalolentis K5.</title>
        <authorList>
            <consortium name="US DOE Joint Genome Institute"/>
            <person name="Copeland A."/>
            <person name="Lucas S."/>
            <person name="Lapidus A."/>
            <person name="Barry K."/>
            <person name="Detter J.C."/>
            <person name="Glavina T."/>
            <person name="Hammon N."/>
            <person name="Israni S."/>
            <person name="Dalin E."/>
            <person name="Tice H."/>
            <person name="Pitluck S."/>
            <person name="Brettin T."/>
            <person name="Bruce D."/>
            <person name="Han C."/>
            <person name="Tapia R."/>
            <person name="Sims D.R."/>
            <person name="Gilna P."/>
            <person name="Schmutz J."/>
            <person name="Larimer F."/>
            <person name="Land M."/>
            <person name="Hauser L."/>
            <person name="Kyrpides N."/>
            <person name="Kim E."/>
            <person name="Richardson P."/>
        </authorList>
    </citation>
    <scope>NUCLEOTIDE SEQUENCE [LARGE SCALE GENOMIC DNA]</scope>
    <source>
        <strain>ATCC BAA-1226 / DSM 17306 / VKM B-2378 / K5</strain>
    </source>
</reference>
<sequence length="665" mass="71735">MSSQDLYANAATDKPLMQVKGLIREFKAGEQTIRVLHDINLTIHQGEMVAIIGQSGSGKSTLMNILGCLDQATAGDYQVFGQSVNRLVPDELAKLRREHFGFIFQRYHLLGDISARDNVSVPAVYAGMDGQARNERAEKLLSDLGLADKVNNRPSQLSGGQQQRVSIARALMNGGDIILADEPTGALDSKSGKDVVQILKDLNAQGHTIIMVTHDPSLAAQAERVIEIKDGYIIADYKNEDYQRPAAQPASIIDKHRKSAFGSFIDRLLESFKMSLLAMRAHKMRTLLTMLGIIIGIASVVSVVGLGKGSQEQILSNISSLGTNTITVTDGYPYGDPRRQYNDDNLTPQDAQAVADQPYVLSVSPQLNSNMSVRYRNVQEAASISGVGKDYLDVSGETLAMGQGFDEQSILRRTQDIIIDSNAHKTFFPTIANPIGEVLLIGSVPGRVIGVLEPNEGGFSRSVDTPTLYMPYTTMMSRLIGSAYIESFIALIDNNISSSAAESAISDLMTSRHGTDDFRIRNSDSIRQTIESTTAALTLLISSIAIISLIVGGIGVMNIMLVSVTERTNEIGVRMAVGARQSDIMQQFLIEAILVCILGGLLGIGLAFAIGELINRVGGDSFKVIYSSTSIIAAFVCSTLIGVVFGFLPARNAAKLDPVEALSRD</sequence>
<accession>Q1QDA8</accession>
<organism>
    <name type="scientific">Psychrobacter cryohalolentis (strain ATCC BAA-1226 / DSM 17306 / VKM B-2378 / K5)</name>
    <dbReference type="NCBI Taxonomy" id="335284"/>
    <lineage>
        <taxon>Bacteria</taxon>
        <taxon>Pseudomonadati</taxon>
        <taxon>Pseudomonadota</taxon>
        <taxon>Gammaproteobacteria</taxon>
        <taxon>Moraxellales</taxon>
        <taxon>Moraxellaceae</taxon>
        <taxon>Psychrobacter</taxon>
    </lineage>
</organism>
<feature type="chain" id="PRO_0000269968" description="Macrolide export ATP-binding/permease protein MacB">
    <location>
        <begin position="1"/>
        <end position="665"/>
    </location>
</feature>
<feature type="transmembrane region" description="Helical" evidence="1">
    <location>
        <begin position="287"/>
        <end position="307"/>
    </location>
</feature>
<feature type="transmembrane region" description="Helical" evidence="1">
    <location>
        <begin position="544"/>
        <end position="564"/>
    </location>
</feature>
<feature type="transmembrane region" description="Helical" evidence="1">
    <location>
        <begin position="588"/>
        <end position="608"/>
    </location>
</feature>
<feature type="transmembrane region" description="Helical" evidence="1">
    <location>
        <begin position="630"/>
        <end position="650"/>
    </location>
</feature>
<feature type="domain" description="ABC transporter" evidence="1">
    <location>
        <begin position="17"/>
        <end position="255"/>
    </location>
</feature>
<feature type="binding site" evidence="1">
    <location>
        <begin position="53"/>
        <end position="60"/>
    </location>
    <ligand>
        <name>ATP</name>
        <dbReference type="ChEBI" id="CHEBI:30616"/>
    </ligand>
</feature>
<name>MACB_PSYCK</name>